<keyword id="KW-0067">ATP-binding</keyword>
<keyword id="KW-0963">Cytoplasm</keyword>
<keyword id="KW-1015">Disulfide bond</keyword>
<keyword id="KW-0547">Nucleotide-binding</keyword>
<keyword id="KW-1185">Reference proteome</keyword>
<keyword id="KW-0694">RNA-binding</keyword>
<keyword id="KW-0808">Transferase</keyword>
<keyword id="KW-0819">tRNA processing</keyword>
<keyword id="KW-0820">tRNA-binding</keyword>
<sequence>MNKLPHETRVVIGMSGGVDSSVAALLLKEQGYDVIGIFMKNWDDTDENGVCTATEDYNDVIEVCNQIGIPYYAVNFEKQYWDKVFTYFLDEYRAGRTPNPDVMCNKEIKFKAFLEHAIALGADYVATGHYARVAYMDGEYKMLRGVDDNKDQTYFLNQLSQEQLSKTMFPLGELKKPQIREMAKEAGLATAAKKDSTGICFIGERNFKDFLSNYLPAQPGVMQTLSGEVKGKHDGLMYYTIGQRHGLGIGGNGDPWFAVGKNLKENILYVDQGFHNELLYGDEVIATNVGWVSNEAKEKEFKCTAKFRYRQEDNKVTVQIVDENTVRILCDEPIRAITPGQAVVFYDGDECLGGATIDEVYRSGKKLDCLG</sequence>
<proteinExistence type="inferred from homology"/>
<evidence type="ECO:0000255" key="1">
    <source>
        <dbReference type="HAMAP-Rule" id="MF_00144"/>
    </source>
</evidence>
<dbReference type="EC" id="2.8.1.13" evidence="1"/>
<dbReference type="EMBL" id="AE016879">
    <property type="protein sequence ID" value="AAP28329.1"/>
    <property type="molecule type" value="Genomic_DNA"/>
</dbReference>
<dbReference type="EMBL" id="AE017334">
    <property type="protein sequence ID" value="AAT33748.1"/>
    <property type="molecule type" value="Genomic_DNA"/>
</dbReference>
<dbReference type="EMBL" id="AE017225">
    <property type="protein sequence ID" value="AAT56590.1"/>
    <property type="molecule type" value="Genomic_DNA"/>
</dbReference>
<dbReference type="RefSeq" id="NP_846843.1">
    <property type="nucleotide sequence ID" value="NC_003997.3"/>
</dbReference>
<dbReference type="RefSeq" id="WP_001038005.1">
    <property type="nucleotide sequence ID" value="NZ_WXXJ01000027.1"/>
</dbReference>
<dbReference type="RefSeq" id="YP_030539.1">
    <property type="nucleotide sequence ID" value="NC_005945.1"/>
</dbReference>
<dbReference type="SMR" id="Q81JE5"/>
<dbReference type="IntAct" id="Q81JE5">
    <property type="interactions" value="2"/>
</dbReference>
<dbReference type="STRING" id="261594.GBAA_4625"/>
<dbReference type="DNASU" id="1085347"/>
<dbReference type="GeneID" id="45024269"/>
<dbReference type="KEGG" id="ban:BA_4625"/>
<dbReference type="KEGG" id="bar:GBAA_4625"/>
<dbReference type="KEGG" id="bat:BAS4291"/>
<dbReference type="PATRIC" id="fig|198094.11.peg.4591"/>
<dbReference type="eggNOG" id="COG0482">
    <property type="taxonomic scope" value="Bacteria"/>
</dbReference>
<dbReference type="HOGENOM" id="CLU_035188_1_0_9"/>
<dbReference type="OMA" id="PFYVWDL"/>
<dbReference type="OrthoDB" id="9800696at2"/>
<dbReference type="Proteomes" id="UP000000427">
    <property type="component" value="Chromosome"/>
</dbReference>
<dbReference type="Proteomes" id="UP000000594">
    <property type="component" value="Chromosome"/>
</dbReference>
<dbReference type="GO" id="GO:0005737">
    <property type="term" value="C:cytoplasm"/>
    <property type="evidence" value="ECO:0007669"/>
    <property type="project" value="UniProtKB-SubCell"/>
</dbReference>
<dbReference type="GO" id="GO:0005524">
    <property type="term" value="F:ATP binding"/>
    <property type="evidence" value="ECO:0007669"/>
    <property type="project" value="UniProtKB-KW"/>
</dbReference>
<dbReference type="GO" id="GO:0000049">
    <property type="term" value="F:tRNA binding"/>
    <property type="evidence" value="ECO:0007669"/>
    <property type="project" value="UniProtKB-KW"/>
</dbReference>
<dbReference type="GO" id="GO:0103016">
    <property type="term" value="F:tRNA-uridine 2-sulfurtransferase activity"/>
    <property type="evidence" value="ECO:0007669"/>
    <property type="project" value="UniProtKB-EC"/>
</dbReference>
<dbReference type="GO" id="GO:0002143">
    <property type="term" value="P:tRNA wobble position uridine thiolation"/>
    <property type="evidence" value="ECO:0007669"/>
    <property type="project" value="TreeGrafter"/>
</dbReference>
<dbReference type="CDD" id="cd01998">
    <property type="entry name" value="MnmA_TRMU-like"/>
    <property type="match status" value="1"/>
</dbReference>
<dbReference type="FunFam" id="2.30.30.280:FF:000001">
    <property type="entry name" value="tRNA-specific 2-thiouridylase MnmA"/>
    <property type="match status" value="1"/>
</dbReference>
<dbReference type="FunFam" id="2.40.30.10:FF:000023">
    <property type="entry name" value="tRNA-specific 2-thiouridylase MnmA"/>
    <property type="match status" value="1"/>
</dbReference>
<dbReference type="FunFam" id="3.40.50.620:FF:000004">
    <property type="entry name" value="tRNA-specific 2-thiouridylase MnmA"/>
    <property type="match status" value="1"/>
</dbReference>
<dbReference type="Gene3D" id="2.30.30.280">
    <property type="entry name" value="Adenine nucleotide alpha hydrolases-like domains"/>
    <property type="match status" value="1"/>
</dbReference>
<dbReference type="Gene3D" id="3.40.50.620">
    <property type="entry name" value="HUPs"/>
    <property type="match status" value="1"/>
</dbReference>
<dbReference type="Gene3D" id="2.40.30.10">
    <property type="entry name" value="Translation factors"/>
    <property type="match status" value="1"/>
</dbReference>
<dbReference type="HAMAP" id="MF_00144">
    <property type="entry name" value="tRNA_thiouridyl_MnmA"/>
    <property type="match status" value="1"/>
</dbReference>
<dbReference type="InterPro" id="IPR004506">
    <property type="entry name" value="MnmA-like"/>
</dbReference>
<dbReference type="InterPro" id="IPR046885">
    <property type="entry name" value="MnmA-like_C"/>
</dbReference>
<dbReference type="InterPro" id="IPR046884">
    <property type="entry name" value="MnmA-like_central"/>
</dbReference>
<dbReference type="InterPro" id="IPR023382">
    <property type="entry name" value="MnmA-like_central_sf"/>
</dbReference>
<dbReference type="InterPro" id="IPR014729">
    <property type="entry name" value="Rossmann-like_a/b/a_fold"/>
</dbReference>
<dbReference type="NCBIfam" id="NF001138">
    <property type="entry name" value="PRK00143.1"/>
    <property type="match status" value="1"/>
</dbReference>
<dbReference type="NCBIfam" id="TIGR00420">
    <property type="entry name" value="trmU"/>
    <property type="match status" value="1"/>
</dbReference>
<dbReference type="PANTHER" id="PTHR11933:SF5">
    <property type="entry name" value="MITOCHONDRIAL TRNA-SPECIFIC 2-THIOURIDYLASE 1"/>
    <property type="match status" value="1"/>
</dbReference>
<dbReference type="PANTHER" id="PTHR11933">
    <property type="entry name" value="TRNA 5-METHYLAMINOMETHYL-2-THIOURIDYLATE -METHYLTRANSFERASE"/>
    <property type="match status" value="1"/>
</dbReference>
<dbReference type="Pfam" id="PF03054">
    <property type="entry name" value="tRNA_Me_trans"/>
    <property type="match status" value="1"/>
</dbReference>
<dbReference type="Pfam" id="PF20258">
    <property type="entry name" value="tRNA_Me_trans_C"/>
    <property type="match status" value="1"/>
</dbReference>
<dbReference type="Pfam" id="PF20259">
    <property type="entry name" value="tRNA_Me_trans_M"/>
    <property type="match status" value="1"/>
</dbReference>
<dbReference type="SUPFAM" id="SSF52402">
    <property type="entry name" value="Adenine nucleotide alpha hydrolases-like"/>
    <property type="match status" value="1"/>
</dbReference>
<protein>
    <recommendedName>
        <fullName evidence="1">tRNA-specific 2-thiouridylase MnmA</fullName>
        <ecNumber evidence="1">2.8.1.13</ecNumber>
    </recommendedName>
</protein>
<name>MNMA_BACAN</name>
<feature type="chain" id="PRO_0000121602" description="tRNA-specific 2-thiouridylase MnmA">
    <location>
        <begin position="1"/>
        <end position="371"/>
    </location>
</feature>
<feature type="region of interest" description="Interaction with target base in tRNA" evidence="1">
    <location>
        <begin position="99"/>
        <end position="101"/>
    </location>
</feature>
<feature type="region of interest" description="Interaction with tRNA" evidence="1">
    <location>
        <begin position="150"/>
        <end position="152"/>
    </location>
</feature>
<feature type="region of interest" description="Interaction with tRNA" evidence="1">
    <location>
        <begin position="308"/>
        <end position="309"/>
    </location>
</feature>
<feature type="active site" description="Nucleophile" evidence="1">
    <location>
        <position position="104"/>
    </location>
</feature>
<feature type="active site" description="Cysteine persulfide intermediate" evidence="1">
    <location>
        <position position="200"/>
    </location>
</feature>
<feature type="binding site" evidence="1">
    <location>
        <begin position="13"/>
        <end position="20"/>
    </location>
    <ligand>
        <name>ATP</name>
        <dbReference type="ChEBI" id="CHEBI:30616"/>
    </ligand>
</feature>
<feature type="binding site" evidence="1">
    <location>
        <position position="39"/>
    </location>
    <ligand>
        <name>ATP</name>
        <dbReference type="ChEBI" id="CHEBI:30616"/>
    </ligand>
</feature>
<feature type="binding site" evidence="1">
    <location>
        <position position="128"/>
    </location>
    <ligand>
        <name>ATP</name>
        <dbReference type="ChEBI" id="CHEBI:30616"/>
    </ligand>
</feature>
<feature type="site" description="Interaction with tRNA" evidence="1">
    <location>
        <position position="129"/>
    </location>
</feature>
<feature type="site" description="Interaction with tRNA" evidence="1">
    <location>
        <position position="341"/>
    </location>
</feature>
<feature type="disulfide bond" description="Alternate" evidence="1">
    <location>
        <begin position="104"/>
        <end position="200"/>
    </location>
</feature>
<organism>
    <name type="scientific">Bacillus anthracis</name>
    <dbReference type="NCBI Taxonomy" id="1392"/>
    <lineage>
        <taxon>Bacteria</taxon>
        <taxon>Bacillati</taxon>
        <taxon>Bacillota</taxon>
        <taxon>Bacilli</taxon>
        <taxon>Bacillales</taxon>
        <taxon>Bacillaceae</taxon>
        <taxon>Bacillus</taxon>
        <taxon>Bacillus cereus group</taxon>
    </lineage>
</organism>
<reference key="1">
    <citation type="journal article" date="2003" name="Nature">
        <title>The genome sequence of Bacillus anthracis Ames and comparison to closely related bacteria.</title>
        <authorList>
            <person name="Read T.D."/>
            <person name="Peterson S.N."/>
            <person name="Tourasse N.J."/>
            <person name="Baillie L.W."/>
            <person name="Paulsen I.T."/>
            <person name="Nelson K.E."/>
            <person name="Tettelin H."/>
            <person name="Fouts D.E."/>
            <person name="Eisen J.A."/>
            <person name="Gill S.R."/>
            <person name="Holtzapple E.K."/>
            <person name="Okstad O.A."/>
            <person name="Helgason E."/>
            <person name="Rilstone J."/>
            <person name="Wu M."/>
            <person name="Kolonay J.F."/>
            <person name="Beanan M.J."/>
            <person name="Dodson R.J."/>
            <person name="Brinkac L.M."/>
            <person name="Gwinn M.L."/>
            <person name="DeBoy R.T."/>
            <person name="Madpu R."/>
            <person name="Daugherty S.C."/>
            <person name="Durkin A.S."/>
            <person name="Haft D.H."/>
            <person name="Nelson W.C."/>
            <person name="Peterson J.D."/>
            <person name="Pop M."/>
            <person name="Khouri H.M."/>
            <person name="Radune D."/>
            <person name="Benton J.L."/>
            <person name="Mahamoud Y."/>
            <person name="Jiang L."/>
            <person name="Hance I.R."/>
            <person name="Weidman J.F."/>
            <person name="Berry K.J."/>
            <person name="Plaut R.D."/>
            <person name="Wolf A.M."/>
            <person name="Watkins K.L."/>
            <person name="Nierman W.C."/>
            <person name="Hazen A."/>
            <person name="Cline R.T."/>
            <person name="Redmond C."/>
            <person name="Thwaite J.E."/>
            <person name="White O."/>
            <person name="Salzberg S.L."/>
            <person name="Thomason B."/>
            <person name="Friedlander A.M."/>
            <person name="Koehler T.M."/>
            <person name="Hanna P.C."/>
            <person name="Kolstoe A.-B."/>
            <person name="Fraser C.M."/>
        </authorList>
    </citation>
    <scope>NUCLEOTIDE SEQUENCE [LARGE SCALE GENOMIC DNA]</scope>
    <source>
        <strain>Ames / isolate Porton</strain>
    </source>
</reference>
<reference key="2">
    <citation type="journal article" date="2009" name="J. Bacteriol.">
        <title>The complete genome sequence of Bacillus anthracis Ames 'Ancestor'.</title>
        <authorList>
            <person name="Ravel J."/>
            <person name="Jiang L."/>
            <person name="Stanley S.T."/>
            <person name="Wilson M.R."/>
            <person name="Decker R.S."/>
            <person name="Read T.D."/>
            <person name="Worsham P."/>
            <person name="Keim P.S."/>
            <person name="Salzberg S.L."/>
            <person name="Fraser-Liggett C.M."/>
            <person name="Rasko D.A."/>
        </authorList>
    </citation>
    <scope>NUCLEOTIDE SEQUENCE [LARGE SCALE GENOMIC DNA]</scope>
    <source>
        <strain>Ames ancestor</strain>
    </source>
</reference>
<reference key="3">
    <citation type="submission" date="2004-01" db="EMBL/GenBank/DDBJ databases">
        <title>Complete genome sequence of Bacillus anthracis Sterne.</title>
        <authorList>
            <person name="Brettin T.S."/>
            <person name="Bruce D."/>
            <person name="Challacombe J.F."/>
            <person name="Gilna P."/>
            <person name="Han C."/>
            <person name="Hill K."/>
            <person name="Hitchcock P."/>
            <person name="Jackson P."/>
            <person name="Keim P."/>
            <person name="Longmire J."/>
            <person name="Lucas S."/>
            <person name="Okinaka R."/>
            <person name="Richardson P."/>
            <person name="Rubin E."/>
            <person name="Tice H."/>
        </authorList>
    </citation>
    <scope>NUCLEOTIDE SEQUENCE [LARGE SCALE GENOMIC DNA]</scope>
    <source>
        <strain>Sterne</strain>
    </source>
</reference>
<comment type="function">
    <text evidence="1">Catalyzes the 2-thiolation of uridine at the wobble position (U34) of tRNA, leading to the formation of s(2)U34.</text>
</comment>
<comment type="catalytic activity">
    <reaction evidence="1">
        <text>S-sulfanyl-L-cysteinyl-[protein] + uridine(34) in tRNA + AH2 + ATP = 2-thiouridine(34) in tRNA + L-cysteinyl-[protein] + A + AMP + diphosphate + H(+)</text>
        <dbReference type="Rhea" id="RHEA:47032"/>
        <dbReference type="Rhea" id="RHEA-COMP:10131"/>
        <dbReference type="Rhea" id="RHEA-COMP:11726"/>
        <dbReference type="Rhea" id="RHEA-COMP:11727"/>
        <dbReference type="Rhea" id="RHEA-COMP:11728"/>
        <dbReference type="ChEBI" id="CHEBI:13193"/>
        <dbReference type="ChEBI" id="CHEBI:15378"/>
        <dbReference type="ChEBI" id="CHEBI:17499"/>
        <dbReference type="ChEBI" id="CHEBI:29950"/>
        <dbReference type="ChEBI" id="CHEBI:30616"/>
        <dbReference type="ChEBI" id="CHEBI:33019"/>
        <dbReference type="ChEBI" id="CHEBI:61963"/>
        <dbReference type="ChEBI" id="CHEBI:65315"/>
        <dbReference type="ChEBI" id="CHEBI:87170"/>
        <dbReference type="ChEBI" id="CHEBI:456215"/>
        <dbReference type="EC" id="2.8.1.13"/>
    </reaction>
</comment>
<comment type="subcellular location">
    <subcellularLocation>
        <location evidence="1">Cytoplasm</location>
    </subcellularLocation>
</comment>
<comment type="similarity">
    <text evidence="1">Belongs to the MnmA/TRMU family.</text>
</comment>
<accession>Q81JE5</accession>
<accession>Q6HSZ9</accession>
<accession>Q6KM88</accession>
<gene>
    <name evidence="1" type="primary">mnmA</name>
    <name type="synonym">trmU</name>
    <name type="ordered locus">BA_4625</name>
    <name type="ordered locus">GBAA_4625</name>
    <name type="ordered locus">BAS4291</name>
</gene>